<accession>B8I255</accession>
<gene>
    <name evidence="1" type="primary">fmt</name>
    <name type="ordered locus">Ccel_1529</name>
</gene>
<keyword id="KW-0648">Protein biosynthesis</keyword>
<keyword id="KW-1185">Reference proteome</keyword>
<keyword id="KW-0808">Transferase</keyword>
<dbReference type="EC" id="2.1.2.9" evidence="1"/>
<dbReference type="EMBL" id="CP001348">
    <property type="protein sequence ID" value="ACL75881.1"/>
    <property type="molecule type" value="Genomic_DNA"/>
</dbReference>
<dbReference type="RefSeq" id="WP_015925022.1">
    <property type="nucleotide sequence ID" value="NC_011898.1"/>
</dbReference>
<dbReference type="SMR" id="B8I255"/>
<dbReference type="STRING" id="394503.Ccel_1529"/>
<dbReference type="KEGG" id="cce:Ccel_1529"/>
<dbReference type="eggNOG" id="COG0223">
    <property type="taxonomic scope" value="Bacteria"/>
</dbReference>
<dbReference type="HOGENOM" id="CLU_033347_1_1_9"/>
<dbReference type="OrthoDB" id="9802815at2"/>
<dbReference type="Proteomes" id="UP000001349">
    <property type="component" value="Chromosome"/>
</dbReference>
<dbReference type="GO" id="GO:0005829">
    <property type="term" value="C:cytosol"/>
    <property type="evidence" value="ECO:0007669"/>
    <property type="project" value="TreeGrafter"/>
</dbReference>
<dbReference type="GO" id="GO:0004479">
    <property type="term" value="F:methionyl-tRNA formyltransferase activity"/>
    <property type="evidence" value="ECO:0007669"/>
    <property type="project" value="UniProtKB-UniRule"/>
</dbReference>
<dbReference type="CDD" id="cd08646">
    <property type="entry name" value="FMT_core_Met-tRNA-FMT_N"/>
    <property type="match status" value="1"/>
</dbReference>
<dbReference type="CDD" id="cd08704">
    <property type="entry name" value="Met_tRNA_FMT_C"/>
    <property type="match status" value="1"/>
</dbReference>
<dbReference type="FunFam" id="3.40.50.12230:FF:000001">
    <property type="entry name" value="Methionyl-tRNA formyltransferase"/>
    <property type="match status" value="1"/>
</dbReference>
<dbReference type="Gene3D" id="3.40.50.12230">
    <property type="match status" value="1"/>
</dbReference>
<dbReference type="HAMAP" id="MF_00182">
    <property type="entry name" value="Formyl_trans"/>
    <property type="match status" value="1"/>
</dbReference>
<dbReference type="InterPro" id="IPR005794">
    <property type="entry name" value="Fmt"/>
</dbReference>
<dbReference type="InterPro" id="IPR005793">
    <property type="entry name" value="Formyl_trans_C"/>
</dbReference>
<dbReference type="InterPro" id="IPR002376">
    <property type="entry name" value="Formyl_transf_N"/>
</dbReference>
<dbReference type="InterPro" id="IPR036477">
    <property type="entry name" value="Formyl_transf_N_sf"/>
</dbReference>
<dbReference type="InterPro" id="IPR011034">
    <property type="entry name" value="Formyl_transferase-like_C_sf"/>
</dbReference>
<dbReference type="InterPro" id="IPR001555">
    <property type="entry name" value="GART_AS"/>
</dbReference>
<dbReference type="InterPro" id="IPR044135">
    <property type="entry name" value="Met-tRNA-FMT_C"/>
</dbReference>
<dbReference type="InterPro" id="IPR041711">
    <property type="entry name" value="Met-tRNA-FMT_N"/>
</dbReference>
<dbReference type="NCBIfam" id="TIGR00460">
    <property type="entry name" value="fmt"/>
    <property type="match status" value="1"/>
</dbReference>
<dbReference type="PANTHER" id="PTHR11138">
    <property type="entry name" value="METHIONYL-TRNA FORMYLTRANSFERASE"/>
    <property type="match status" value="1"/>
</dbReference>
<dbReference type="PANTHER" id="PTHR11138:SF5">
    <property type="entry name" value="METHIONYL-TRNA FORMYLTRANSFERASE, MITOCHONDRIAL"/>
    <property type="match status" value="1"/>
</dbReference>
<dbReference type="Pfam" id="PF02911">
    <property type="entry name" value="Formyl_trans_C"/>
    <property type="match status" value="1"/>
</dbReference>
<dbReference type="Pfam" id="PF00551">
    <property type="entry name" value="Formyl_trans_N"/>
    <property type="match status" value="1"/>
</dbReference>
<dbReference type="SUPFAM" id="SSF50486">
    <property type="entry name" value="FMT C-terminal domain-like"/>
    <property type="match status" value="1"/>
</dbReference>
<dbReference type="SUPFAM" id="SSF53328">
    <property type="entry name" value="Formyltransferase"/>
    <property type="match status" value="1"/>
</dbReference>
<dbReference type="PROSITE" id="PS00373">
    <property type="entry name" value="GART"/>
    <property type="match status" value="1"/>
</dbReference>
<proteinExistence type="inferred from homology"/>
<protein>
    <recommendedName>
        <fullName evidence="1">Methionyl-tRNA formyltransferase</fullName>
        <ecNumber evidence="1">2.1.2.9</ecNumber>
    </recommendedName>
</protein>
<organism>
    <name type="scientific">Ruminiclostridium cellulolyticum (strain ATCC 35319 / DSM 5812 / JCM 6584 / H10)</name>
    <name type="common">Clostridium cellulolyticum</name>
    <dbReference type="NCBI Taxonomy" id="394503"/>
    <lineage>
        <taxon>Bacteria</taxon>
        <taxon>Bacillati</taxon>
        <taxon>Bacillota</taxon>
        <taxon>Clostridia</taxon>
        <taxon>Eubacteriales</taxon>
        <taxon>Oscillospiraceae</taxon>
        <taxon>Ruminiclostridium</taxon>
    </lineage>
</organism>
<sequence>MKIIFMGTPEFAVPSLEMLINEGYNVIAVVTQPDKPKGRGKKLAAPPVKEFALEHGIKVLQPAKIKTPEFVEQIRELGPDLLITAAYGKIISKDMLDVPPLGCINVHGSLLPAYRGAAPIHWSIINGEKVTGITTMFTDVGLDTGDMLLKRELEISSDMTAGELHDEMAILGAEVLKDTLIHLKNGTLVRSPQDDALSSYAPIITKEVGLIDWNKTVQQVHNLVRGTNPWPGAFTFINESKMRVWKTCIVDFGNSQEHCPGEIVSVDDKGILVKCCDGYIMIKELQFDSSKRMKVRDYIRGNKIDTGEKLGK</sequence>
<evidence type="ECO:0000255" key="1">
    <source>
        <dbReference type="HAMAP-Rule" id="MF_00182"/>
    </source>
</evidence>
<comment type="function">
    <text evidence="1">Attaches a formyl group to the free amino group of methionyl-tRNA(fMet). The formyl group appears to play a dual role in the initiator identity of N-formylmethionyl-tRNA by promoting its recognition by IF2 and preventing the misappropriation of this tRNA by the elongation apparatus.</text>
</comment>
<comment type="catalytic activity">
    <reaction evidence="1">
        <text>L-methionyl-tRNA(fMet) + (6R)-10-formyltetrahydrofolate = N-formyl-L-methionyl-tRNA(fMet) + (6S)-5,6,7,8-tetrahydrofolate + H(+)</text>
        <dbReference type="Rhea" id="RHEA:24380"/>
        <dbReference type="Rhea" id="RHEA-COMP:9952"/>
        <dbReference type="Rhea" id="RHEA-COMP:9953"/>
        <dbReference type="ChEBI" id="CHEBI:15378"/>
        <dbReference type="ChEBI" id="CHEBI:57453"/>
        <dbReference type="ChEBI" id="CHEBI:78530"/>
        <dbReference type="ChEBI" id="CHEBI:78844"/>
        <dbReference type="ChEBI" id="CHEBI:195366"/>
        <dbReference type="EC" id="2.1.2.9"/>
    </reaction>
</comment>
<comment type="similarity">
    <text evidence="1">Belongs to the Fmt family.</text>
</comment>
<name>FMT_RUMCH</name>
<feature type="chain" id="PRO_1000190017" description="Methionyl-tRNA formyltransferase">
    <location>
        <begin position="1"/>
        <end position="312"/>
    </location>
</feature>
<feature type="binding site" evidence="1">
    <location>
        <begin position="109"/>
        <end position="112"/>
    </location>
    <ligand>
        <name>(6S)-5,6,7,8-tetrahydrofolate</name>
        <dbReference type="ChEBI" id="CHEBI:57453"/>
    </ligand>
</feature>
<reference key="1">
    <citation type="submission" date="2009-01" db="EMBL/GenBank/DDBJ databases">
        <title>Complete sequence of Clostridium cellulolyticum H10.</title>
        <authorList>
            <consortium name="US DOE Joint Genome Institute"/>
            <person name="Lucas S."/>
            <person name="Copeland A."/>
            <person name="Lapidus A."/>
            <person name="Glavina del Rio T."/>
            <person name="Dalin E."/>
            <person name="Tice H."/>
            <person name="Bruce D."/>
            <person name="Goodwin L."/>
            <person name="Pitluck S."/>
            <person name="Chertkov O."/>
            <person name="Saunders E."/>
            <person name="Brettin T."/>
            <person name="Detter J.C."/>
            <person name="Han C."/>
            <person name="Larimer F."/>
            <person name="Land M."/>
            <person name="Hauser L."/>
            <person name="Kyrpides N."/>
            <person name="Ivanova N."/>
            <person name="Zhou J."/>
            <person name="Richardson P."/>
        </authorList>
    </citation>
    <scope>NUCLEOTIDE SEQUENCE [LARGE SCALE GENOMIC DNA]</scope>
    <source>
        <strain>ATCC 35319 / DSM 5812 / JCM 6584 / H10</strain>
    </source>
</reference>